<reference key="1">
    <citation type="submission" date="2006-08" db="EMBL/GenBank/DDBJ databases">
        <title>Complete sequence of chromosome 1 of Burkholderia cepacia AMMD.</title>
        <authorList>
            <person name="Copeland A."/>
            <person name="Lucas S."/>
            <person name="Lapidus A."/>
            <person name="Barry K."/>
            <person name="Detter J.C."/>
            <person name="Glavina del Rio T."/>
            <person name="Hammon N."/>
            <person name="Israni S."/>
            <person name="Pitluck S."/>
            <person name="Bruce D."/>
            <person name="Chain P."/>
            <person name="Malfatti S."/>
            <person name="Shin M."/>
            <person name="Vergez L."/>
            <person name="Schmutz J."/>
            <person name="Larimer F."/>
            <person name="Land M."/>
            <person name="Hauser L."/>
            <person name="Kyrpides N."/>
            <person name="Kim E."/>
            <person name="Parke J."/>
            <person name="Coenye T."/>
            <person name="Konstantinidis K."/>
            <person name="Ramette A."/>
            <person name="Tiedje J."/>
            <person name="Richardson P."/>
        </authorList>
    </citation>
    <scope>NUCLEOTIDE SEQUENCE [LARGE SCALE GENOMIC DNA]</scope>
    <source>
        <strain>ATCC BAA-244 / DSM 16087 / CCUG 44356 / LMG 19182 / AMMD</strain>
    </source>
</reference>
<name>MOBA_BURCM</name>
<proteinExistence type="inferred from homology"/>
<sequence length="205" mass="21874">MSASPSPSITGLLLAGGRATRMDGADKGLQLLDGTPLALHVLRRLSPQVDETLISANRNADRYAELGAPFDARIVADETADFPGPLAGLLAGMRAARAPLVACAPCDTPYLPADVVARLHAALDAQQADIAMAVTVDAQHARSPQPTFALLRTSLADDLAAALAAGERKVRAWYARHKTVEVEFRDERAFYNANSWHELAALARR</sequence>
<evidence type="ECO:0000255" key="1">
    <source>
        <dbReference type="HAMAP-Rule" id="MF_00316"/>
    </source>
</evidence>
<protein>
    <recommendedName>
        <fullName evidence="1">Molybdenum cofactor guanylyltransferase</fullName>
        <shortName evidence="1">MoCo guanylyltransferase</shortName>
        <ecNumber evidence="1">2.7.7.77</ecNumber>
    </recommendedName>
    <alternativeName>
        <fullName evidence="1">GTP:molybdopterin guanylyltransferase</fullName>
    </alternativeName>
    <alternativeName>
        <fullName evidence="1">Mo-MPT guanylyltransferase</fullName>
    </alternativeName>
    <alternativeName>
        <fullName evidence="1">Molybdopterin guanylyltransferase</fullName>
    </alternativeName>
    <alternativeName>
        <fullName evidence="1">Molybdopterin-guanine dinucleotide synthase</fullName>
        <shortName evidence="1">MGD synthase</shortName>
    </alternativeName>
</protein>
<gene>
    <name evidence="1" type="primary">mobA</name>
    <name type="ordered locus">Bamb_0984</name>
</gene>
<organism>
    <name type="scientific">Burkholderia ambifaria (strain ATCC BAA-244 / DSM 16087 / CCUG 44356 / LMG 19182 / AMMD)</name>
    <name type="common">Burkholderia cepacia (strain AMMD)</name>
    <dbReference type="NCBI Taxonomy" id="339670"/>
    <lineage>
        <taxon>Bacteria</taxon>
        <taxon>Pseudomonadati</taxon>
        <taxon>Pseudomonadota</taxon>
        <taxon>Betaproteobacteria</taxon>
        <taxon>Burkholderiales</taxon>
        <taxon>Burkholderiaceae</taxon>
        <taxon>Burkholderia</taxon>
        <taxon>Burkholderia cepacia complex</taxon>
    </lineage>
</organism>
<comment type="function">
    <text evidence="1">Transfers a GMP moiety from GTP to Mo-molybdopterin (Mo-MPT) cofactor (Moco or molybdenum cofactor) to form Mo-molybdopterin guanine dinucleotide (Mo-MGD) cofactor.</text>
</comment>
<comment type="catalytic activity">
    <reaction evidence="1">
        <text>Mo-molybdopterin + GTP + H(+) = Mo-molybdopterin guanine dinucleotide + diphosphate</text>
        <dbReference type="Rhea" id="RHEA:34243"/>
        <dbReference type="ChEBI" id="CHEBI:15378"/>
        <dbReference type="ChEBI" id="CHEBI:33019"/>
        <dbReference type="ChEBI" id="CHEBI:37565"/>
        <dbReference type="ChEBI" id="CHEBI:71302"/>
        <dbReference type="ChEBI" id="CHEBI:71310"/>
        <dbReference type="EC" id="2.7.7.77"/>
    </reaction>
</comment>
<comment type="cofactor">
    <cofactor evidence="1">
        <name>Mg(2+)</name>
        <dbReference type="ChEBI" id="CHEBI:18420"/>
    </cofactor>
</comment>
<comment type="subunit">
    <text evidence="1">Monomer.</text>
</comment>
<comment type="subcellular location">
    <subcellularLocation>
        <location evidence="1">Cytoplasm</location>
    </subcellularLocation>
</comment>
<comment type="domain">
    <text evidence="1">The N-terminal domain determines nucleotide recognition and specific binding, while the C-terminal domain determines the specific binding to the target protein.</text>
</comment>
<comment type="similarity">
    <text evidence="1">Belongs to the MobA family.</text>
</comment>
<feature type="chain" id="PRO_1000019110" description="Molybdenum cofactor guanylyltransferase">
    <location>
        <begin position="1"/>
        <end position="205"/>
    </location>
</feature>
<feature type="binding site" evidence="1">
    <location>
        <begin position="14"/>
        <end position="16"/>
    </location>
    <ligand>
        <name>GTP</name>
        <dbReference type="ChEBI" id="CHEBI:37565"/>
    </ligand>
</feature>
<feature type="binding site" evidence="1">
    <location>
        <position position="27"/>
    </location>
    <ligand>
        <name>GTP</name>
        <dbReference type="ChEBI" id="CHEBI:37565"/>
    </ligand>
</feature>
<feature type="binding site" evidence="1">
    <location>
        <position position="77"/>
    </location>
    <ligand>
        <name>GTP</name>
        <dbReference type="ChEBI" id="CHEBI:37565"/>
    </ligand>
</feature>
<feature type="binding site" evidence="1">
    <location>
        <position position="107"/>
    </location>
    <ligand>
        <name>GTP</name>
        <dbReference type="ChEBI" id="CHEBI:37565"/>
    </ligand>
</feature>
<feature type="binding site" evidence="1">
    <location>
        <position position="107"/>
    </location>
    <ligand>
        <name>Mg(2+)</name>
        <dbReference type="ChEBI" id="CHEBI:18420"/>
    </ligand>
</feature>
<keyword id="KW-0963">Cytoplasm</keyword>
<keyword id="KW-0342">GTP-binding</keyword>
<keyword id="KW-0460">Magnesium</keyword>
<keyword id="KW-0479">Metal-binding</keyword>
<keyword id="KW-0501">Molybdenum cofactor biosynthesis</keyword>
<keyword id="KW-0547">Nucleotide-binding</keyword>
<keyword id="KW-0808">Transferase</keyword>
<accession>Q0BH30</accession>
<dbReference type="EC" id="2.7.7.77" evidence="1"/>
<dbReference type="EMBL" id="CP000440">
    <property type="protein sequence ID" value="ABI86543.1"/>
    <property type="molecule type" value="Genomic_DNA"/>
</dbReference>
<dbReference type="RefSeq" id="WP_011656332.1">
    <property type="nucleotide sequence ID" value="NC_008390.1"/>
</dbReference>
<dbReference type="SMR" id="Q0BH30"/>
<dbReference type="GeneID" id="93083606"/>
<dbReference type="KEGG" id="bam:Bamb_0984"/>
<dbReference type="PATRIC" id="fig|339670.21.peg.589"/>
<dbReference type="eggNOG" id="COG0746">
    <property type="taxonomic scope" value="Bacteria"/>
</dbReference>
<dbReference type="Proteomes" id="UP000000662">
    <property type="component" value="Chromosome 1"/>
</dbReference>
<dbReference type="GO" id="GO:0005737">
    <property type="term" value="C:cytoplasm"/>
    <property type="evidence" value="ECO:0007669"/>
    <property type="project" value="UniProtKB-SubCell"/>
</dbReference>
<dbReference type="GO" id="GO:0005525">
    <property type="term" value="F:GTP binding"/>
    <property type="evidence" value="ECO:0007669"/>
    <property type="project" value="UniProtKB-UniRule"/>
</dbReference>
<dbReference type="GO" id="GO:0046872">
    <property type="term" value="F:metal ion binding"/>
    <property type="evidence" value="ECO:0007669"/>
    <property type="project" value="UniProtKB-KW"/>
</dbReference>
<dbReference type="GO" id="GO:0061603">
    <property type="term" value="F:molybdenum cofactor guanylyltransferase activity"/>
    <property type="evidence" value="ECO:0007669"/>
    <property type="project" value="UniProtKB-EC"/>
</dbReference>
<dbReference type="GO" id="GO:1902758">
    <property type="term" value="P:bis(molybdopterin guanine dinucleotide)molybdenum biosynthetic process"/>
    <property type="evidence" value="ECO:0007669"/>
    <property type="project" value="TreeGrafter"/>
</dbReference>
<dbReference type="CDD" id="cd02503">
    <property type="entry name" value="MobA"/>
    <property type="match status" value="1"/>
</dbReference>
<dbReference type="Gene3D" id="3.90.550.10">
    <property type="entry name" value="Spore Coat Polysaccharide Biosynthesis Protein SpsA, Chain A"/>
    <property type="match status" value="1"/>
</dbReference>
<dbReference type="HAMAP" id="MF_00316">
    <property type="entry name" value="MobA"/>
    <property type="match status" value="1"/>
</dbReference>
<dbReference type="InterPro" id="IPR025877">
    <property type="entry name" value="MobA-like_NTP_Trfase"/>
</dbReference>
<dbReference type="InterPro" id="IPR013482">
    <property type="entry name" value="Molybde_CF_guanTrfase"/>
</dbReference>
<dbReference type="InterPro" id="IPR029044">
    <property type="entry name" value="Nucleotide-diphossugar_trans"/>
</dbReference>
<dbReference type="NCBIfam" id="TIGR02665">
    <property type="entry name" value="molyb_mobA"/>
    <property type="match status" value="1"/>
</dbReference>
<dbReference type="PANTHER" id="PTHR19136">
    <property type="entry name" value="MOLYBDENUM COFACTOR GUANYLYLTRANSFERASE"/>
    <property type="match status" value="1"/>
</dbReference>
<dbReference type="PANTHER" id="PTHR19136:SF81">
    <property type="entry name" value="MOLYBDENUM COFACTOR GUANYLYLTRANSFERASE"/>
    <property type="match status" value="1"/>
</dbReference>
<dbReference type="Pfam" id="PF12804">
    <property type="entry name" value="NTP_transf_3"/>
    <property type="match status" value="1"/>
</dbReference>
<dbReference type="SUPFAM" id="SSF53448">
    <property type="entry name" value="Nucleotide-diphospho-sugar transferases"/>
    <property type="match status" value="1"/>
</dbReference>